<sequence>MTNSNEAQENALSPERQAERDEVLAKAKKAKEVSSQLLLNTQQKNDLLADAADALEANAADIIAANEKDIATGKERGFADSLLDRLALDTERISGIAGGLRQVIGLSDPVGEIVRGHTRPNGLRMKQVRVPLGVMGMVYEARPNVTVDAFGLAIKSGNVPLLRGSKSARHTNEKLVQILQDVAESHNLPRELVQLLPCDTHDSVQDLITARGLVDLVIPRGGAGLINAVVLGATVPTIETGTGNCHFYIDSSADIEEATKLVINGKTRRCSVCNATEVVLLDSALPDPDKIYVLQELQKAGVTLHGEKKQLDPLINDVVQAEETDWTDEYLSFDIAVAIVDGVEEAVAHINRYGTSHTEGIAARDYKTTSYFEQYVDAAAVSINTSTAWTDGEMFGFGAEIGISTQKLHARGPMGLPELTSTKWVINGEGQVRP</sequence>
<accession>Q4JWT3</accession>
<dbReference type="EC" id="1.2.1.41" evidence="1"/>
<dbReference type="EMBL" id="CR931997">
    <property type="protein sequence ID" value="CAI36724.1"/>
    <property type="molecule type" value="Genomic_DNA"/>
</dbReference>
<dbReference type="RefSeq" id="WP_005296463.1">
    <property type="nucleotide sequence ID" value="NC_007164.1"/>
</dbReference>
<dbReference type="SMR" id="Q4JWT3"/>
<dbReference type="STRING" id="306537.jk0565"/>
<dbReference type="GeneID" id="92738068"/>
<dbReference type="KEGG" id="cjk:jk0565"/>
<dbReference type="eggNOG" id="COG0014">
    <property type="taxonomic scope" value="Bacteria"/>
</dbReference>
<dbReference type="HOGENOM" id="CLU_030231_0_0_11"/>
<dbReference type="OrthoDB" id="9809970at2"/>
<dbReference type="UniPathway" id="UPA00098">
    <property type="reaction ID" value="UER00360"/>
</dbReference>
<dbReference type="Proteomes" id="UP000000545">
    <property type="component" value="Chromosome"/>
</dbReference>
<dbReference type="GO" id="GO:0005737">
    <property type="term" value="C:cytoplasm"/>
    <property type="evidence" value="ECO:0007669"/>
    <property type="project" value="UniProtKB-SubCell"/>
</dbReference>
<dbReference type="GO" id="GO:0004350">
    <property type="term" value="F:glutamate-5-semialdehyde dehydrogenase activity"/>
    <property type="evidence" value="ECO:0007669"/>
    <property type="project" value="UniProtKB-UniRule"/>
</dbReference>
<dbReference type="GO" id="GO:0050661">
    <property type="term" value="F:NADP binding"/>
    <property type="evidence" value="ECO:0007669"/>
    <property type="project" value="InterPro"/>
</dbReference>
<dbReference type="GO" id="GO:0055129">
    <property type="term" value="P:L-proline biosynthetic process"/>
    <property type="evidence" value="ECO:0007669"/>
    <property type="project" value="UniProtKB-UniRule"/>
</dbReference>
<dbReference type="CDD" id="cd07079">
    <property type="entry name" value="ALDH_F18-19_ProA-GPR"/>
    <property type="match status" value="1"/>
</dbReference>
<dbReference type="Gene3D" id="3.40.605.10">
    <property type="entry name" value="Aldehyde Dehydrogenase, Chain A, domain 1"/>
    <property type="match status" value="1"/>
</dbReference>
<dbReference type="Gene3D" id="3.40.309.10">
    <property type="entry name" value="Aldehyde Dehydrogenase, Chain A, domain 2"/>
    <property type="match status" value="1"/>
</dbReference>
<dbReference type="HAMAP" id="MF_00412">
    <property type="entry name" value="ProA"/>
    <property type="match status" value="1"/>
</dbReference>
<dbReference type="InterPro" id="IPR016161">
    <property type="entry name" value="Ald_DH/histidinol_DH"/>
</dbReference>
<dbReference type="InterPro" id="IPR016163">
    <property type="entry name" value="Ald_DH_C"/>
</dbReference>
<dbReference type="InterPro" id="IPR016162">
    <property type="entry name" value="Ald_DH_N"/>
</dbReference>
<dbReference type="InterPro" id="IPR015590">
    <property type="entry name" value="Aldehyde_DH_dom"/>
</dbReference>
<dbReference type="InterPro" id="IPR020593">
    <property type="entry name" value="G-glutamylP_reductase_CS"/>
</dbReference>
<dbReference type="InterPro" id="IPR012134">
    <property type="entry name" value="Glu-5-SA_DH"/>
</dbReference>
<dbReference type="InterPro" id="IPR000965">
    <property type="entry name" value="GPR_dom"/>
</dbReference>
<dbReference type="NCBIfam" id="NF001221">
    <property type="entry name" value="PRK00197.1"/>
    <property type="match status" value="1"/>
</dbReference>
<dbReference type="NCBIfam" id="TIGR00407">
    <property type="entry name" value="proA"/>
    <property type="match status" value="1"/>
</dbReference>
<dbReference type="PANTHER" id="PTHR11063:SF8">
    <property type="entry name" value="DELTA-1-PYRROLINE-5-CARBOXYLATE SYNTHASE"/>
    <property type="match status" value="1"/>
</dbReference>
<dbReference type="PANTHER" id="PTHR11063">
    <property type="entry name" value="GLUTAMATE SEMIALDEHYDE DEHYDROGENASE"/>
    <property type="match status" value="1"/>
</dbReference>
<dbReference type="Pfam" id="PF00171">
    <property type="entry name" value="Aldedh"/>
    <property type="match status" value="1"/>
</dbReference>
<dbReference type="PIRSF" id="PIRSF000151">
    <property type="entry name" value="GPR"/>
    <property type="match status" value="1"/>
</dbReference>
<dbReference type="SUPFAM" id="SSF53720">
    <property type="entry name" value="ALDH-like"/>
    <property type="match status" value="1"/>
</dbReference>
<dbReference type="PROSITE" id="PS01223">
    <property type="entry name" value="PROA"/>
    <property type="match status" value="1"/>
</dbReference>
<feature type="chain" id="PRO_0000229999" description="Gamma-glutamyl phosphate reductase">
    <location>
        <begin position="1"/>
        <end position="434"/>
    </location>
</feature>
<feature type="region of interest" description="Disordered" evidence="2">
    <location>
        <begin position="1"/>
        <end position="26"/>
    </location>
</feature>
<feature type="compositionally biased region" description="Polar residues" evidence="2">
    <location>
        <begin position="1"/>
        <end position="11"/>
    </location>
</feature>
<feature type="compositionally biased region" description="Basic and acidic residues" evidence="2">
    <location>
        <begin position="16"/>
        <end position="25"/>
    </location>
</feature>
<gene>
    <name evidence="1" type="primary">proA</name>
    <name type="ordered locus">jk0565</name>
</gene>
<comment type="function">
    <text evidence="1">Catalyzes the NADPH-dependent reduction of L-glutamate 5-phosphate into L-glutamate 5-semialdehyde and phosphate. The product spontaneously undergoes cyclization to form 1-pyrroline-5-carboxylate.</text>
</comment>
<comment type="catalytic activity">
    <reaction evidence="1">
        <text>L-glutamate 5-semialdehyde + phosphate + NADP(+) = L-glutamyl 5-phosphate + NADPH + H(+)</text>
        <dbReference type="Rhea" id="RHEA:19541"/>
        <dbReference type="ChEBI" id="CHEBI:15378"/>
        <dbReference type="ChEBI" id="CHEBI:43474"/>
        <dbReference type="ChEBI" id="CHEBI:57783"/>
        <dbReference type="ChEBI" id="CHEBI:58066"/>
        <dbReference type="ChEBI" id="CHEBI:58274"/>
        <dbReference type="ChEBI" id="CHEBI:58349"/>
        <dbReference type="EC" id="1.2.1.41"/>
    </reaction>
</comment>
<comment type="pathway">
    <text evidence="1">Amino-acid biosynthesis; L-proline biosynthesis; L-glutamate 5-semialdehyde from L-glutamate: step 2/2.</text>
</comment>
<comment type="subcellular location">
    <subcellularLocation>
        <location evidence="1">Cytoplasm</location>
    </subcellularLocation>
</comment>
<comment type="similarity">
    <text evidence="1">Belongs to the gamma-glutamyl phosphate reductase family.</text>
</comment>
<proteinExistence type="inferred from homology"/>
<evidence type="ECO:0000255" key="1">
    <source>
        <dbReference type="HAMAP-Rule" id="MF_00412"/>
    </source>
</evidence>
<evidence type="ECO:0000256" key="2">
    <source>
        <dbReference type="SAM" id="MobiDB-lite"/>
    </source>
</evidence>
<name>PROA_CORJK</name>
<reference key="1">
    <citation type="journal article" date="2005" name="J. Bacteriol.">
        <title>Complete genome sequence and analysis of the multiresistant nosocomial pathogen Corynebacterium jeikeium K411, a lipid-requiring bacterium of the human skin flora.</title>
        <authorList>
            <person name="Tauch A."/>
            <person name="Kaiser O."/>
            <person name="Hain T."/>
            <person name="Goesmann A."/>
            <person name="Weisshaar B."/>
            <person name="Albersmeier A."/>
            <person name="Bekel T."/>
            <person name="Bischoff N."/>
            <person name="Brune I."/>
            <person name="Chakraborty T."/>
            <person name="Kalinowski J."/>
            <person name="Meyer F."/>
            <person name="Rupp O."/>
            <person name="Schneiker S."/>
            <person name="Viehoever P."/>
            <person name="Puehler A."/>
        </authorList>
    </citation>
    <scope>NUCLEOTIDE SEQUENCE [LARGE SCALE GENOMIC DNA]</scope>
    <source>
        <strain>K411</strain>
    </source>
</reference>
<keyword id="KW-0028">Amino-acid biosynthesis</keyword>
<keyword id="KW-0963">Cytoplasm</keyword>
<keyword id="KW-0521">NADP</keyword>
<keyword id="KW-0560">Oxidoreductase</keyword>
<keyword id="KW-0641">Proline biosynthesis</keyword>
<keyword id="KW-1185">Reference proteome</keyword>
<organism>
    <name type="scientific">Corynebacterium jeikeium (strain K411)</name>
    <dbReference type="NCBI Taxonomy" id="306537"/>
    <lineage>
        <taxon>Bacteria</taxon>
        <taxon>Bacillati</taxon>
        <taxon>Actinomycetota</taxon>
        <taxon>Actinomycetes</taxon>
        <taxon>Mycobacteriales</taxon>
        <taxon>Corynebacteriaceae</taxon>
        <taxon>Corynebacterium</taxon>
    </lineage>
</organism>
<protein>
    <recommendedName>
        <fullName evidence="1">Gamma-glutamyl phosphate reductase</fullName>
        <shortName evidence="1">GPR</shortName>
        <ecNumber evidence="1">1.2.1.41</ecNumber>
    </recommendedName>
    <alternativeName>
        <fullName evidence="1">Glutamate-5-semialdehyde dehydrogenase</fullName>
    </alternativeName>
    <alternativeName>
        <fullName evidence="1">Glutamyl-gamma-semialdehyde dehydrogenase</fullName>
        <shortName evidence="1">GSA dehydrogenase</shortName>
    </alternativeName>
</protein>